<keyword id="KW-0028">Amino-acid biosynthesis</keyword>
<keyword id="KW-0057">Aromatic amino acid biosynthesis</keyword>
<keyword id="KW-0274">FAD</keyword>
<keyword id="KW-0285">Flavoprotein</keyword>
<keyword id="KW-0288">FMN</keyword>
<keyword id="KW-0456">Lyase</keyword>
<keyword id="KW-0521">NADP</keyword>
<keyword id="KW-1185">Reference proteome</keyword>
<feature type="chain" id="PRO_0000256331" description="Chorismate synthase">
    <location>
        <begin position="1"/>
        <end position="389"/>
    </location>
</feature>
<feature type="binding site" evidence="1">
    <location>
        <position position="41"/>
    </location>
    <ligand>
        <name>NADP(+)</name>
        <dbReference type="ChEBI" id="CHEBI:58349"/>
    </ligand>
</feature>
<feature type="binding site" evidence="1">
    <location>
        <position position="47"/>
    </location>
    <ligand>
        <name>NADP(+)</name>
        <dbReference type="ChEBI" id="CHEBI:58349"/>
    </ligand>
</feature>
<feature type="binding site" evidence="1">
    <location>
        <begin position="129"/>
        <end position="131"/>
    </location>
    <ligand>
        <name>FMN</name>
        <dbReference type="ChEBI" id="CHEBI:58210"/>
    </ligand>
</feature>
<feature type="binding site" evidence="1">
    <location>
        <begin position="247"/>
        <end position="248"/>
    </location>
    <ligand>
        <name>FMN</name>
        <dbReference type="ChEBI" id="CHEBI:58210"/>
    </ligand>
</feature>
<feature type="binding site" evidence="1">
    <location>
        <position position="291"/>
    </location>
    <ligand>
        <name>FMN</name>
        <dbReference type="ChEBI" id="CHEBI:58210"/>
    </ligand>
</feature>
<feature type="binding site" evidence="1">
    <location>
        <begin position="306"/>
        <end position="310"/>
    </location>
    <ligand>
        <name>FMN</name>
        <dbReference type="ChEBI" id="CHEBI:58210"/>
    </ligand>
</feature>
<feature type="binding site" evidence="1">
    <location>
        <position position="332"/>
    </location>
    <ligand>
        <name>FMN</name>
        <dbReference type="ChEBI" id="CHEBI:58210"/>
    </ligand>
</feature>
<sequence>MRFGFSTAGESHGPAEVVIVHGVPAGLRLLAEDVDRDLARRQLGYGRGGRQKIERDRVEFLGGVRHGRTLGSPVAMLVRNRDYANWERRMNPAPVEDPPEPITLPRPGHADLAGMQKYGFGDLRNVLERSSARETVARVAAGAVARRLLGEFGVRVFSAVYRIGEVAMDRALAAAGAGKADRSEVRCPDPEVSERMKAEIDAARHARDALGGEFVVVAEGCPPGLGSYADWRDRLDARLAAAVVSINAIKGVEIGDAFEAARRRSSEVQDEIVRRGGALGRASNRLGGLEGGMTNGEPVVVAAAMKPISTIARALRTVDLSTGEEARAFRERADSCAVPAAAVIGEAMVAVVLAEAFLEKFGADALEDIRASYEHYMRRIGLPARRADA</sequence>
<protein>
    <recommendedName>
        <fullName evidence="1">Chorismate synthase</fullName>
        <shortName evidence="1">CS</shortName>
        <ecNumber evidence="1">4.2.3.5</ecNumber>
    </recommendedName>
    <alternativeName>
        <fullName evidence="1">5-enolpyruvylshikimate-3-phosphate phospholyase</fullName>
    </alternativeName>
</protein>
<reference key="1">
    <citation type="submission" date="2006-06" db="EMBL/GenBank/DDBJ databases">
        <title>Complete sequence of Rubrobacter xylanophilus DSM 9941.</title>
        <authorList>
            <consortium name="US DOE Joint Genome Institute"/>
            <person name="Copeland A."/>
            <person name="Lucas S."/>
            <person name="Lapidus A."/>
            <person name="Barry K."/>
            <person name="Detter J.C."/>
            <person name="Glavina del Rio T."/>
            <person name="Hammon N."/>
            <person name="Israni S."/>
            <person name="Dalin E."/>
            <person name="Tice H."/>
            <person name="Pitluck S."/>
            <person name="Munk A.C."/>
            <person name="Brettin T."/>
            <person name="Bruce D."/>
            <person name="Han C."/>
            <person name="Tapia R."/>
            <person name="Gilna P."/>
            <person name="Schmutz J."/>
            <person name="Larimer F."/>
            <person name="Land M."/>
            <person name="Hauser L."/>
            <person name="Kyrpides N."/>
            <person name="Lykidis A."/>
            <person name="da Costa M.S."/>
            <person name="Rainey F.A."/>
            <person name="Empadinhas N."/>
            <person name="Jolivet E."/>
            <person name="Battista J.R."/>
            <person name="Richardson P."/>
        </authorList>
    </citation>
    <scope>NUCLEOTIDE SEQUENCE [LARGE SCALE GENOMIC DNA]</scope>
    <source>
        <strain>DSM 9941 / JCM 11954 / NBRC 16129 / PRD-1</strain>
    </source>
</reference>
<evidence type="ECO:0000255" key="1">
    <source>
        <dbReference type="HAMAP-Rule" id="MF_00300"/>
    </source>
</evidence>
<proteinExistence type="inferred from homology"/>
<organism>
    <name type="scientific">Rubrobacter xylanophilus (strain DSM 9941 / JCM 11954 / NBRC 16129 / PRD-1)</name>
    <dbReference type="NCBI Taxonomy" id="266117"/>
    <lineage>
        <taxon>Bacteria</taxon>
        <taxon>Bacillati</taxon>
        <taxon>Actinomycetota</taxon>
        <taxon>Rubrobacteria</taxon>
        <taxon>Rubrobacterales</taxon>
        <taxon>Rubrobacteraceae</taxon>
        <taxon>Rubrobacter</taxon>
    </lineage>
</organism>
<name>AROC_RUBXD</name>
<comment type="function">
    <text evidence="1">Catalyzes the anti-1,4-elimination of the C-3 phosphate and the C-6 proR hydrogen from 5-enolpyruvylshikimate-3-phosphate (EPSP) to yield chorismate, which is the branch point compound that serves as the starting substrate for the three terminal pathways of aromatic amino acid biosynthesis. This reaction introduces a second double bond into the aromatic ring system.</text>
</comment>
<comment type="catalytic activity">
    <reaction evidence="1">
        <text>5-O-(1-carboxyvinyl)-3-phosphoshikimate = chorismate + phosphate</text>
        <dbReference type="Rhea" id="RHEA:21020"/>
        <dbReference type="ChEBI" id="CHEBI:29748"/>
        <dbReference type="ChEBI" id="CHEBI:43474"/>
        <dbReference type="ChEBI" id="CHEBI:57701"/>
        <dbReference type="EC" id="4.2.3.5"/>
    </reaction>
</comment>
<comment type="cofactor">
    <cofactor evidence="1">
        <name>FMNH2</name>
        <dbReference type="ChEBI" id="CHEBI:57618"/>
    </cofactor>
    <text evidence="1">Reduced FMN (FMNH(2)).</text>
</comment>
<comment type="pathway">
    <text evidence="1">Metabolic intermediate biosynthesis; chorismate biosynthesis; chorismate from D-erythrose 4-phosphate and phosphoenolpyruvate: step 7/7.</text>
</comment>
<comment type="subunit">
    <text evidence="1">Homotetramer.</text>
</comment>
<comment type="similarity">
    <text evidence="1">Belongs to the chorismate synthase family.</text>
</comment>
<accession>Q1AW05</accession>
<gene>
    <name evidence="1" type="primary">aroC</name>
    <name type="ordered locus">Rxyl_1461</name>
</gene>
<dbReference type="EC" id="4.2.3.5" evidence="1"/>
<dbReference type="EMBL" id="CP000386">
    <property type="protein sequence ID" value="ABG04423.1"/>
    <property type="molecule type" value="Genomic_DNA"/>
</dbReference>
<dbReference type="RefSeq" id="WP_011564440.1">
    <property type="nucleotide sequence ID" value="NC_008148.1"/>
</dbReference>
<dbReference type="SMR" id="Q1AW05"/>
<dbReference type="STRING" id="266117.Rxyl_1461"/>
<dbReference type="KEGG" id="rxy:Rxyl_1461"/>
<dbReference type="eggNOG" id="COG0082">
    <property type="taxonomic scope" value="Bacteria"/>
</dbReference>
<dbReference type="HOGENOM" id="CLU_034547_2_0_11"/>
<dbReference type="OrthoDB" id="9771806at2"/>
<dbReference type="PhylomeDB" id="Q1AW05"/>
<dbReference type="UniPathway" id="UPA00053">
    <property type="reaction ID" value="UER00090"/>
</dbReference>
<dbReference type="Proteomes" id="UP000006637">
    <property type="component" value="Chromosome"/>
</dbReference>
<dbReference type="GO" id="GO:0005829">
    <property type="term" value="C:cytosol"/>
    <property type="evidence" value="ECO:0007669"/>
    <property type="project" value="TreeGrafter"/>
</dbReference>
<dbReference type="GO" id="GO:0004107">
    <property type="term" value="F:chorismate synthase activity"/>
    <property type="evidence" value="ECO:0007669"/>
    <property type="project" value="UniProtKB-UniRule"/>
</dbReference>
<dbReference type="GO" id="GO:0010181">
    <property type="term" value="F:FMN binding"/>
    <property type="evidence" value="ECO:0007669"/>
    <property type="project" value="TreeGrafter"/>
</dbReference>
<dbReference type="GO" id="GO:0008652">
    <property type="term" value="P:amino acid biosynthetic process"/>
    <property type="evidence" value="ECO:0007669"/>
    <property type="project" value="UniProtKB-KW"/>
</dbReference>
<dbReference type="GO" id="GO:0009073">
    <property type="term" value="P:aromatic amino acid family biosynthetic process"/>
    <property type="evidence" value="ECO:0007669"/>
    <property type="project" value="UniProtKB-KW"/>
</dbReference>
<dbReference type="GO" id="GO:0009423">
    <property type="term" value="P:chorismate biosynthetic process"/>
    <property type="evidence" value="ECO:0007669"/>
    <property type="project" value="UniProtKB-UniRule"/>
</dbReference>
<dbReference type="CDD" id="cd07304">
    <property type="entry name" value="Chorismate_synthase"/>
    <property type="match status" value="1"/>
</dbReference>
<dbReference type="FunFam" id="3.60.150.10:FF:000002">
    <property type="entry name" value="Chorismate synthase"/>
    <property type="match status" value="1"/>
</dbReference>
<dbReference type="Gene3D" id="3.60.150.10">
    <property type="entry name" value="Chorismate synthase AroC"/>
    <property type="match status" value="1"/>
</dbReference>
<dbReference type="HAMAP" id="MF_00300">
    <property type="entry name" value="Chorismate_synth"/>
    <property type="match status" value="1"/>
</dbReference>
<dbReference type="InterPro" id="IPR000453">
    <property type="entry name" value="Chorismate_synth"/>
</dbReference>
<dbReference type="InterPro" id="IPR035904">
    <property type="entry name" value="Chorismate_synth_AroC_sf"/>
</dbReference>
<dbReference type="InterPro" id="IPR020541">
    <property type="entry name" value="Chorismate_synthase_CS"/>
</dbReference>
<dbReference type="NCBIfam" id="TIGR00033">
    <property type="entry name" value="aroC"/>
    <property type="match status" value="1"/>
</dbReference>
<dbReference type="NCBIfam" id="NF003793">
    <property type="entry name" value="PRK05382.1"/>
    <property type="match status" value="1"/>
</dbReference>
<dbReference type="PANTHER" id="PTHR21085">
    <property type="entry name" value="CHORISMATE SYNTHASE"/>
    <property type="match status" value="1"/>
</dbReference>
<dbReference type="PANTHER" id="PTHR21085:SF0">
    <property type="entry name" value="CHORISMATE SYNTHASE"/>
    <property type="match status" value="1"/>
</dbReference>
<dbReference type="Pfam" id="PF01264">
    <property type="entry name" value="Chorismate_synt"/>
    <property type="match status" value="1"/>
</dbReference>
<dbReference type="PIRSF" id="PIRSF001456">
    <property type="entry name" value="Chorismate_synth"/>
    <property type="match status" value="1"/>
</dbReference>
<dbReference type="SUPFAM" id="SSF103263">
    <property type="entry name" value="Chorismate synthase, AroC"/>
    <property type="match status" value="1"/>
</dbReference>
<dbReference type="PROSITE" id="PS00788">
    <property type="entry name" value="CHORISMATE_SYNTHASE_2"/>
    <property type="match status" value="1"/>
</dbReference>